<name>BL1S1_CAEEL</name>
<evidence type="ECO:0000250" key="1"/>
<evidence type="ECO:0000269" key="2">
    <source>
    </source>
</evidence>
<evidence type="ECO:0000305" key="3"/>
<gene>
    <name type="primary">blos-1</name>
    <name type="ORF">T20G5.10</name>
</gene>
<accession>Q22616</accession>
<reference key="1">
    <citation type="journal article" date="1998" name="Science">
        <title>Genome sequence of the nematode C. elegans: a platform for investigating biology.</title>
        <authorList>
            <consortium name="The C. elegans sequencing consortium"/>
        </authorList>
    </citation>
    <scope>NUCLEOTIDE SEQUENCE [LARGE SCALE GENOMIC DNA]</scope>
    <source>
        <strain>Bristol N2</strain>
    </source>
</reference>
<reference key="2">
    <citation type="journal article" date="2012" name="PLoS ONE">
        <title>C. elegans BLOC-1 Functions in Trafficking to Lysosome-Related Gut Granules.</title>
        <authorList>
            <person name="Hermann G.J."/>
            <person name="Scavarda E."/>
            <person name="Weis A.M."/>
            <person name="Saxton D.S."/>
            <person name="Thomas L.L."/>
            <person name="Salesky R."/>
            <person name="Somhegyi H."/>
            <person name="Curtin T.P."/>
            <person name="Barrett A."/>
            <person name="Foster O.K."/>
            <person name="Vine A."/>
            <person name="Erlich K."/>
            <person name="Kwan E."/>
            <person name="Rabbitts B.M."/>
            <person name="Warren K."/>
        </authorList>
    </citation>
    <scope>IDENTIFICATION IN THE BLOC-1 COMPLEX</scope>
    <scope>FUNCTION</scope>
    <scope>INTERACTION WITH GLO-2</scope>
</reference>
<proteinExistence type="evidence at protein level"/>
<dbReference type="EMBL" id="Z30423">
    <property type="protein sequence ID" value="CAA83011.1"/>
    <property type="molecule type" value="Genomic_DNA"/>
</dbReference>
<dbReference type="PIR" id="S42377">
    <property type="entry name" value="S42377"/>
</dbReference>
<dbReference type="RefSeq" id="NP_499262.2">
    <property type="nucleotide sequence ID" value="NM_066861.4"/>
</dbReference>
<dbReference type="EMDB" id="EMD-62312"/>
<dbReference type="SMR" id="Q22616"/>
<dbReference type="BioGRID" id="41629">
    <property type="interactions" value="4"/>
</dbReference>
<dbReference type="ComplexPortal" id="CPX-479">
    <property type="entry name" value="Bloc-1 complex"/>
</dbReference>
<dbReference type="DIP" id="DIP-25647N"/>
<dbReference type="FunCoup" id="Q22616">
    <property type="interactions" value="857"/>
</dbReference>
<dbReference type="IntAct" id="Q22616">
    <property type="interactions" value="1"/>
</dbReference>
<dbReference type="STRING" id="6239.T20G5.10.1"/>
<dbReference type="PaxDb" id="6239-T20G5.10"/>
<dbReference type="PeptideAtlas" id="Q22616"/>
<dbReference type="EnsemblMetazoa" id="T20G5.10.1">
    <property type="protein sequence ID" value="T20G5.10.1"/>
    <property type="gene ID" value="WBGene00011872"/>
</dbReference>
<dbReference type="GeneID" id="176435"/>
<dbReference type="KEGG" id="cel:CELE_T20G5.10"/>
<dbReference type="UCSC" id="T20G5.10">
    <property type="organism name" value="c. elegans"/>
</dbReference>
<dbReference type="AGR" id="WB:WBGene00011872"/>
<dbReference type="CTD" id="176435"/>
<dbReference type="WormBase" id="T20G5.10">
    <property type="protein sequence ID" value="CE51581"/>
    <property type="gene ID" value="WBGene00011872"/>
    <property type="gene designation" value="blos-1"/>
</dbReference>
<dbReference type="eggNOG" id="KOG3390">
    <property type="taxonomic scope" value="Eukaryota"/>
</dbReference>
<dbReference type="GeneTree" id="ENSGT00390000002689"/>
<dbReference type="HOGENOM" id="CLU_115602_3_0_1"/>
<dbReference type="InParanoid" id="Q22616"/>
<dbReference type="OMA" id="WMKIMEY"/>
<dbReference type="OrthoDB" id="20018at2759"/>
<dbReference type="PhylomeDB" id="Q22616"/>
<dbReference type="Reactome" id="R-CEL-432720">
    <property type="pathway name" value="Lysosome Vesicle Biogenesis"/>
</dbReference>
<dbReference type="PRO" id="PR:Q22616"/>
<dbReference type="Proteomes" id="UP000001940">
    <property type="component" value="Chromosome III"/>
</dbReference>
<dbReference type="Bgee" id="WBGene00011872">
    <property type="expression patterns" value="Expressed in embryo and 4 other cell types or tissues"/>
</dbReference>
<dbReference type="GO" id="GO:0031082">
    <property type="term" value="C:BLOC complex"/>
    <property type="evidence" value="ECO:0000303"/>
    <property type="project" value="ComplexPortal"/>
</dbReference>
<dbReference type="GO" id="GO:0031083">
    <property type="term" value="C:BLOC-1 complex"/>
    <property type="evidence" value="ECO:0000318"/>
    <property type="project" value="GO_Central"/>
</dbReference>
<dbReference type="GO" id="GO:0005829">
    <property type="term" value="C:cytosol"/>
    <property type="evidence" value="ECO:0007669"/>
    <property type="project" value="UniProtKB-SubCell"/>
</dbReference>
<dbReference type="GO" id="GO:0005758">
    <property type="term" value="C:mitochondrial intermembrane space"/>
    <property type="evidence" value="ECO:0007669"/>
    <property type="project" value="UniProtKB-SubCell"/>
</dbReference>
<dbReference type="GO" id="GO:0005759">
    <property type="term" value="C:mitochondrial matrix"/>
    <property type="evidence" value="ECO:0007669"/>
    <property type="project" value="UniProtKB-SubCell"/>
</dbReference>
<dbReference type="GO" id="GO:0016197">
    <property type="term" value="P:endosomal transport"/>
    <property type="evidence" value="ECO:0000315"/>
    <property type="project" value="UniProtKB"/>
</dbReference>
<dbReference type="GO" id="GO:1904757">
    <property type="term" value="P:positive regulation of gut granule assembly"/>
    <property type="evidence" value="ECO:0000303"/>
    <property type="project" value="ComplexPortal"/>
</dbReference>
<dbReference type="InterPro" id="IPR009395">
    <property type="entry name" value="BLOC1S1"/>
</dbReference>
<dbReference type="PANTHER" id="PTHR13073:SF0">
    <property type="entry name" value="BIOGENESIS OF LYSOSOME-RELATED ORGANELLES COMPLEX 1 SUBUNIT 1"/>
    <property type="match status" value="1"/>
</dbReference>
<dbReference type="PANTHER" id="PTHR13073">
    <property type="entry name" value="BLOC-1 COMPLEX SUBUNIT 1"/>
    <property type="match status" value="1"/>
</dbReference>
<dbReference type="Pfam" id="PF06320">
    <property type="entry name" value="GCN5L1"/>
    <property type="match status" value="1"/>
</dbReference>
<feature type="chain" id="PRO_0000156335" description="Biogenesis of lysosome-related organelles complex 1 subunit 1">
    <location>
        <begin position="1"/>
        <end position="129"/>
    </location>
</feature>
<organism>
    <name type="scientific">Caenorhabditis elegans</name>
    <dbReference type="NCBI Taxonomy" id="6239"/>
    <lineage>
        <taxon>Eukaryota</taxon>
        <taxon>Metazoa</taxon>
        <taxon>Ecdysozoa</taxon>
        <taxon>Nematoda</taxon>
        <taxon>Chromadorea</taxon>
        <taxon>Rhabditida</taxon>
        <taxon>Rhabditina</taxon>
        <taxon>Rhabditomorpha</taxon>
        <taxon>Rhabditoidea</taxon>
        <taxon>Rhabditidae</taxon>
        <taxon>Peloderinae</taxon>
        <taxon>Caenorhabditis</taxon>
    </lineage>
</organism>
<keyword id="KW-0963">Cytoplasm</keyword>
<keyword id="KW-0496">Mitochondrion</keyword>
<keyword id="KW-1185">Reference proteome</keyword>
<sequence>MLKEHSKKQHLRREVQEKLKNEAIVAAQTLSTAVVDHLNAKVAQAYGNQKRLDVEAKRFENNSAALAKQTEQWLFITEGLNYALKEIGDVENWSKTIENDMKIITETLRRAYEAKNPPLPPNQANPASH</sequence>
<comment type="function">
    <text evidence="2">Component of the biogenesis of lysosome-related organelles complex-1 (BLOC-1), a complex involved in gut granule biogenesis. May negatively regulate aerobic respiration through mitochondrial protein lysine-acetylation.</text>
</comment>
<comment type="subunit">
    <text evidence="2">Component of the biogenesis of lysosome-related organelles complex-1 (BLOC-1) composed at least of blos-1, blos-2, blos-4, dsbn-1, glo-2, mutd-1 and snpn-1. Interacts with glo-2.</text>
</comment>
<comment type="subcellular location">
    <subcellularLocation>
        <location evidence="1">Mitochondrion intermembrane space</location>
    </subcellularLocation>
    <subcellularLocation>
        <location evidence="1">Mitochondrion matrix</location>
    </subcellularLocation>
    <subcellularLocation>
        <location evidence="1">Cytoplasm</location>
        <location evidence="1">Cytosol</location>
    </subcellularLocation>
</comment>
<comment type="similarity">
    <text evidence="3">Belongs to the BLOC1S1 family.</text>
</comment>
<protein>
    <recommendedName>
        <fullName>Biogenesis of lysosome-related organelles complex 1 subunit 1</fullName>
        <shortName>BLOC-1 subunit 1</shortName>
    </recommendedName>
</protein>